<gene>
    <name type="primary">DIXDC1</name>
    <name type="synonym">CCD1</name>
    <name type="synonym">KIAA1735</name>
</gene>
<accession>Q155Q3</accession>
<accession>A1A5D8</accession>
<accession>E9PRV4</accession>
<accession>Q6P2J8</accession>
<accession>Q6PIK4</accession>
<accession>Q86SR7</accession>
<accession>Q8IVY4</accession>
<accession>Q96N69</accession>
<accession>Q9C0C8</accession>
<comment type="function">
    <text evidence="6 11">Positive effector of the Wnt signaling pathway; activates WNT3A signaling via DVL2. Regulates JNK activation by AXIN1 and DVL2.</text>
</comment>
<comment type="subunit">
    <text evidence="6 7 8 11">Isoform 1 but not isoform 2 binds filamentous actin. Interacts with the complex composed of DVL2 and Rac. Interacts with AXIN1; competes with MAP3K1. Interacts with MAP3K4 preventing MAP3K4 interaction with AXIN1. Directly interacts (via DIX domain) with DVL2 (via DIX domain). Interacts with gamma-tubulin.</text>
</comment>
<comment type="interaction">
    <interactant intactId="EBI-1104700">
        <id>Q155Q3</id>
    </interactant>
    <interactant intactId="EBI-740850">
        <id>O14641</id>
        <label>DVL2</label>
    </interactant>
    <organismsDiffer>false</organismsDiffer>
    <experiments>2</experiments>
</comment>
<comment type="interaction">
    <interactant intactId="EBI-1104700">
        <id>Q155Q3</id>
    </interactant>
    <interactant intactId="EBI-928842">
        <id>Q9GZM8</id>
        <label>NDEL1</label>
    </interactant>
    <organismsDiffer>false</organismsDiffer>
    <experiments>5</experiments>
</comment>
<comment type="interaction">
    <interactant intactId="EBI-1104700">
        <id>Q155Q3</id>
    </interactant>
    <interactant intactId="EBI-641940">
        <id>Q60838</id>
        <label>Dvl2</label>
    </interactant>
    <organismsDiffer>true</organismsDiffer>
    <experiments>4</experiments>
</comment>
<comment type="subcellular location">
    <subcellularLocation>
        <location evidence="7">Cell junction</location>
        <location evidence="7">Focal adhesion</location>
    </subcellularLocation>
    <subcellularLocation>
        <location evidence="7">Cytoplasm</location>
        <location evidence="7">Cytoskeleton</location>
        <location evidence="7">Stress fiber</location>
    </subcellularLocation>
    <subcellularLocation>
        <location evidence="9">Cytoplasm</location>
    </subcellularLocation>
    <text evidence="7 8">Colocalizes with gamma-tubulin at the centrosome, both during interphase and mitosis (PubMed:19375513). Associated with actin stress fiber at the filament ends (PubMed:16814745).</text>
</comment>
<comment type="subcellular location">
    <molecule>Isoform 2</molecule>
    <subcellularLocation>
        <location evidence="7">Cytoplasm</location>
    </subcellularLocation>
    <text evidence="7">Not associated with stress fibers.</text>
</comment>
<comment type="alternative products">
    <event type="alternative splicing"/>
    <isoform>
        <id>Q155Q3-1</id>
        <name>1</name>
        <name>l-DIXDC1</name>
        <sequence type="displayed"/>
    </isoform>
    <isoform>
        <id>Q155Q3-2</id>
        <name>2</name>
        <name>s-DIXDC1</name>
        <sequence type="described" ref="VSP_025378 VSP_025379"/>
    </isoform>
    <isoform>
        <id>Q155Q3-4</id>
        <name>3</name>
        <sequence type="described" ref="VSP_025380 VSP_025381"/>
    </isoform>
    <isoform>
        <id>Q155Q3-5</id>
        <name>4</name>
        <sequence type="described" ref="VSP_054565 VSP_025380 VSP_025381"/>
    </isoform>
</comment>
<comment type="tissue specificity">
    <text evidence="7">Ubiquitously expressed with higher expression in cardiac and skeletal muscles.</text>
</comment>
<comment type="domain">
    <text evidence="11">The coiled-coil domain mediates interaction with MAP3K4 and inhibition of AXIN1-mediated JNK activation through MAP3K4.</text>
</comment>
<comment type="domain">
    <text evidence="11">The DIX domain mediates interaction with AXIN1 and inhibition of AXIN1-mediated JNK activation through MAP3K1. Mediates interaction with DVL2; this interaction is required for activation of Wnt signaling.</text>
</comment>
<comment type="PTM">
    <text evidence="9">Phosphorylated on tyrosine and serine residues.</text>
</comment>
<comment type="PTM">
    <text evidence="9">Polyubiquitinated, leading to its proteasomal degradation. WNT3A signaling increases DIXDC1 protein levels by inhibiting its ubiquitination and subsequent degradation.</text>
</comment>
<comment type="miscellaneous">
    <molecule>Isoform 1</molecule>
    <text>Major isoform. Ubiquitously expressed.</text>
</comment>
<comment type="miscellaneous">
    <molecule>Isoform 2</molecule>
    <text evidence="14">Major isoform. Preferentially expressed in cardiac and skeletal muscles.</text>
</comment>
<comment type="similarity">
    <text evidence="14">Belongs to the DIXDC1 family.</text>
</comment>
<comment type="sequence caution" evidence="14">
    <conflict type="miscellaneous discrepancy">
        <sequence resource="EMBL-CDS" id="AAH35509"/>
    </conflict>
    <text>Contaminating sequence. Potential poly-A sequence.</text>
</comment>
<comment type="sequence caution" evidence="14">
    <conflict type="miscellaneous discrepancy">
        <sequence resource="EMBL-CDS" id="AAH64479"/>
    </conflict>
    <text>Contaminating sequence. Potential poly-A sequence.</text>
</comment>
<comment type="sequence caution" evidence="14">
    <conflict type="erroneous initiation">
        <sequence resource="EMBL-CDS" id="BAB21826"/>
    </conflict>
    <text>Extended N-terminus.</text>
</comment>
<comment type="sequence caution" evidence="14">
    <conflict type="miscellaneous discrepancy">
        <sequence resource="EMBL-CDS" id="BAB71039"/>
    </conflict>
    <text>Probable cloning artifact.</text>
</comment>
<protein>
    <recommendedName>
        <fullName>Dixin</fullName>
    </recommendedName>
    <alternativeName>
        <fullName>Coiled-coil protein DIX1</fullName>
        <shortName>Coiled-coil-DIX1</shortName>
    </alternativeName>
    <alternativeName>
        <fullName>DIX domain-containing protein 1</fullName>
    </alternativeName>
</protein>
<feature type="chain" id="PRO_0000287223" description="Dixin">
    <location>
        <begin position="1"/>
        <end position="683"/>
    </location>
</feature>
<feature type="domain" description="Calponin-homology (CH)" evidence="3">
    <location>
        <begin position="20"/>
        <end position="127"/>
    </location>
</feature>
<feature type="domain" description="DIX" evidence="4">
    <location>
        <begin position="600"/>
        <end position="680"/>
    </location>
</feature>
<feature type="region of interest" description="Actin-binding" evidence="7">
    <location>
        <begin position="127"/>
        <end position="300"/>
    </location>
</feature>
<feature type="region of interest" description="Disordered" evidence="5">
    <location>
        <begin position="207"/>
        <end position="235"/>
    </location>
</feature>
<feature type="region of interest" description="Disordered" evidence="5">
    <location>
        <begin position="482"/>
        <end position="509"/>
    </location>
</feature>
<feature type="region of interest" description="Disordered" evidence="5">
    <location>
        <begin position="556"/>
        <end position="594"/>
    </location>
</feature>
<feature type="coiled-coil region" evidence="2">
    <location>
        <begin position="279"/>
        <end position="452"/>
    </location>
</feature>
<feature type="compositionally biased region" description="Low complexity" evidence="5">
    <location>
        <begin position="211"/>
        <end position="228"/>
    </location>
</feature>
<feature type="compositionally biased region" description="Polar residues" evidence="5">
    <location>
        <begin position="482"/>
        <end position="492"/>
    </location>
</feature>
<feature type="modified residue" description="Phosphoserine" evidence="1">
    <location>
        <position position="186"/>
    </location>
</feature>
<feature type="modified residue" description="Phosphoserine" evidence="1">
    <location>
        <position position="231"/>
    </location>
</feature>
<feature type="modified residue" description="Phosphoserine" evidence="15">
    <location>
        <position position="590"/>
    </location>
</feature>
<feature type="splice variant" id="VSP_025378" description="In isoform 2." evidence="12 13">
    <location>
        <begin position="1"/>
        <end position="211"/>
    </location>
</feature>
<feature type="splice variant" id="VSP_054565" description="In isoform 4." evidence="13">
    <original>MLACLTRGNLLDVLQEGFNE</original>
    <variation>MGTQVVMRFNNSLLPTEPS</variation>
    <location>
        <begin position="1"/>
        <end position="20"/>
    </location>
</feature>
<feature type="splice variant" id="VSP_025379" description="In isoform 2." evidence="12 13">
    <original>PSESSCSS</original>
    <variation>MGGTQVKC</variation>
    <location>
        <begin position="212"/>
        <end position="219"/>
    </location>
</feature>
<feature type="splice variant" id="VSP_025380" description="In isoform 3 and isoform 4." evidence="13">
    <original>S</original>
    <variation>R</variation>
    <location>
        <position position="219"/>
    </location>
</feature>
<feature type="splice variant" id="VSP_025381" description="In isoform 3 and isoform 4." evidence="13">
    <location>
        <begin position="220"/>
        <end position="683"/>
    </location>
</feature>
<feature type="sequence variant" id="VAR_032294" description="In dbSNP:rs34575249.">
    <original>K</original>
    <variation>R</variation>
    <location>
        <position position="300"/>
    </location>
</feature>
<feature type="mutagenesis site" description="Loss of interaction with DVL2. Abolishes activation of Wnt signaling." evidence="11">
    <original>D</original>
    <variation>A</variation>
    <location>
        <position position="648"/>
    </location>
</feature>
<feature type="mutagenesis site" description="Loss of interaction with DVL2. Abolishes activation of Wnt signaling." evidence="11">
    <original>F</original>
    <variation>A</variation>
    <location>
        <position position="651"/>
    </location>
</feature>
<feature type="mutagenesis site" description="Loss of interaction with DVL2. Abolishes activation of Wnt signaling." evidence="11">
    <original>K</original>
    <variation>A</variation>
    <location>
        <position position="655"/>
    </location>
</feature>
<feature type="sequence conflict" description="In Ref. 1; ABG25914." evidence="14" ref="1">
    <original>S</original>
    <variation>P</variation>
    <location>
        <position position="140"/>
    </location>
</feature>
<feature type="sequence conflict" description="In Ref. 1; ABG25914." evidence="14" ref="1">
    <original>L</original>
    <variation>R</variation>
    <location>
        <position position="144"/>
    </location>
</feature>
<feature type="sequence conflict" description="In Ref. 1; ABG25914." evidence="14" ref="1">
    <original>H</original>
    <variation>Q</variation>
    <location>
        <position position="168"/>
    </location>
</feature>
<feature type="sequence conflict" description="In Ref. 3; BAB71039." evidence="14" ref="3">
    <original>L</original>
    <variation>S</variation>
    <location>
        <position position="378"/>
    </location>
</feature>
<feature type="strand" evidence="16">
    <location>
        <begin position="601"/>
        <end position="606"/>
    </location>
</feature>
<feature type="strand" evidence="16">
    <location>
        <begin position="614"/>
        <end position="620"/>
    </location>
</feature>
<feature type="helix" evidence="16">
    <location>
        <begin position="627"/>
        <end position="634"/>
    </location>
</feature>
<feature type="strand" evidence="16">
    <location>
        <begin position="640"/>
        <end position="648"/>
    </location>
</feature>
<feature type="turn" evidence="16">
    <location>
        <begin position="649"/>
        <end position="651"/>
    </location>
</feature>
<feature type="strand" evidence="16">
    <location>
        <begin position="652"/>
        <end position="658"/>
    </location>
</feature>
<feature type="strand" evidence="16">
    <location>
        <begin position="671"/>
        <end position="678"/>
    </location>
</feature>
<feature type="initiator methionine" description="Removed" evidence="14">
    <location sequence="Q155Q3-2">
        <position position="1"/>
    </location>
</feature>
<feature type="lipid moiety-binding region" description="N-myristoyl glycine" evidence="10">
    <location sequence="Q155Q3-2">
        <position position="2"/>
    </location>
</feature>
<sequence length="683" mass="77478">MLACLTRGNLLDVLQEGFNEQQLQAYVAWVNAQLKKRPAVKPVQDLRQDLRDGVILAYLIEIVAGEKLSGVQLSPGNQQEMKNNVEKVLQFVASKKIRMHQTSAKDIVDGNLKSIMRLVLALAAHFKPGSSRTVNQGRDSRAPLQSHRPHCATAVAQGAAAALADVCHDMSRSGRDVFRYRQRNSSMDEEIENPYWSVRALVQQYEGQQRSPSESSCSSLTSPSPIHSAKSESIITQSEEKADFVIIPAEGIENRTEGTDSPLSRDWRPGSPGTYLETSWEEQLLEQQEYLEKEMEEAKKMISGLQALLLNGSLPEDEQERPLALCEPGVNPEEQLIIIQSRLDQSMEENQDLKKELLKCKQEARNLQGIKDALQQRLTQQDTSVLQLKQELLRANMDKDELHNQNVDLQRKLDERNRLLGEYKKELGQKDRLLQQHQAKLEEALRKLSDVSYHQVDLERELEHKDVLLAHCMKREADEATNYNSHNSQSNGFLLPTAGKGATSVSNRGTSDLQLVRDALRSLRNSFSGHDPQHHTIDSLEQGISSLMERLHVMETQKKQERKVRVKSPRTQVGSEYRESWPPNSKLPHSQSSPTVSSTCTKVLYFTDRSLTPFMVNIPKRLEEVTLKDFKAAIDREGNHRYHFKALDPEFGTVKEEIFHDDDAIPGWEGKIVAWVEEDHGEN</sequence>
<name>DIXC1_HUMAN</name>
<reference key="1">
    <citation type="journal article" date="2006" name="Biochem. Biophys. Res. Commun.">
        <title>DIXDC1 isoform, l-DIXDC1, is a novel filamentous actin-binding protein.</title>
        <authorList>
            <person name="Wang X."/>
            <person name="Zheng L."/>
            <person name="Zeng Z."/>
            <person name="Zhou G."/>
            <person name="Chien J."/>
            <person name="Qian C."/>
            <person name="Vasmatzis G."/>
            <person name="Shridhar V."/>
            <person name="Chen L."/>
            <person name="Liu W."/>
        </authorList>
    </citation>
    <scope>NUCLEOTIDE SEQUENCE [MRNA] (ISOFORM 1)</scope>
    <scope>ALTERNATIVE SPLICING (ISOFORMS 1 AND 2)</scope>
    <scope>TISSUE SPECIFICITY</scope>
    <scope>SUBCELLULAR LOCATION (ISOFORMS 1 AND 2)</scope>
    <scope>INTERACTION WITH ACTIN</scope>
</reference>
<reference key="2">
    <citation type="journal article" date="2000" name="DNA Res.">
        <title>Prediction of the coding sequences of unidentified human genes. XIX. The complete sequences of 100 new cDNA clones from brain which code for large proteins in vitro.</title>
        <authorList>
            <person name="Nagase T."/>
            <person name="Kikuno R."/>
            <person name="Hattori A."/>
            <person name="Kondo Y."/>
            <person name="Okumura K."/>
            <person name="Ohara O."/>
        </authorList>
    </citation>
    <scope>NUCLEOTIDE SEQUENCE [LARGE SCALE MRNA] (ISOFORM 2)</scope>
    <source>
        <tissue>Brain</tissue>
    </source>
</reference>
<reference key="3">
    <citation type="journal article" date="2004" name="Genome Res.">
        <title>The status, quality, and expansion of the NIH full-length cDNA project: the Mammalian Gene Collection (MGC).</title>
        <authorList>
            <consortium name="The MGC Project Team"/>
        </authorList>
    </citation>
    <scope>NUCLEOTIDE SEQUENCE [LARGE SCALE MRNA] (ISOFORMS 2 AND 3)</scope>
    <scope>NUCLEOTIDE SEQUENCE [LARGE SCALE MRNA] OF 1-293 (ISOFORM 1)</scope>
    <scope>NUCLEOTIDE SEQUENCE [LARGE SCALE MRNA] OF 3-218 (ISOFORM 4)</scope>
    <scope>NUCLEOTIDE SEQUENCE [LARGE SCALE MRNA] OF 327-683 (ISOFORMS 1/2)</scope>
    <source>
        <tissue>Brain</tissue>
        <tissue>Uterus</tissue>
    </source>
</reference>
<reference key="4">
    <citation type="journal article" date="2004" name="Nat. Genet.">
        <title>Complete sequencing and characterization of 21,243 full-length human cDNAs.</title>
        <authorList>
            <person name="Ota T."/>
            <person name="Suzuki Y."/>
            <person name="Nishikawa T."/>
            <person name="Otsuki T."/>
            <person name="Sugiyama T."/>
            <person name="Irie R."/>
            <person name="Wakamatsu A."/>
            <person name="Hayashi K."/>
            <person name="Sato H."/>
            <person name="Nagai K."/>
            <person name="Kimura K."/>
            <person name="Makita H."/>
            <person name="Sekine M."/>
            <person name="Obayashi M."/>
            <person name="Nishi T."/>
            <person name="Shibahara T."/>
            <person name="Tanaka T."/>
            <person name="Ishii S."/>
            <person name="Yamamoto J."/>
            <person name="Saito K."/>
            <person name="Kawai Y."/>
            <person name="Isono Y."/>
            <person name="Nakamura Y."/>
            <person name="Nagahari K."/>
            <person name="Murakami K."/>
            <person name="Yasuda T."/>
            <person name="Iwayanagi T."/>
            <person name="Wagatsuma M."/>
            <person name="Shiratori A."/>
            <person name="Sudo H."/>
            <person name="Hosoiri T."/>
            <person name="Kaku Y."/>
            <person name="Kodaira H."/>
            <person name="Kondo H."/>
            <person name="Sugawara M."/>
            <person name="Takahashi M."/>
            <person name="Kanda K."/>
            <person name="Yokoi T."/>
            <person name="Furuya T."/>
            <person name="Kikkawa E."/>
            <person name="Omura Y."/>
            <person name="Abe K."/>
            <person name="Kamihara K."/>
            <person name="Katsuta N."/>
            <person name="Sato K."/>
            <person name="Tanikawa M."/>
            <person name="Yamazaki M."/>
            <person name="Ninomiya K."/>
            <person name="Ishibashi T."/>
            <person name="Yamashita H."/>
            <person name="Murakawa K."/>
            <person name="Fujimori K."/>
            <person name="Tanai H."/>
            <person name="Kimata M."/>
            <person name="Watanabe M."/>
            <person name="Hiraoka S."/>
            <person name="Chiba Y."/>
            <person name="Ishida S."/>
            <person name="Ono Y."/>
            <person name="Takiguchi S."/>
            <person name="Watanabe S."/>
            <person name="Yosida M."/>
            <person name="Hotuta T."/>
            <person name="Kusano J."/>
            <person name="Kanehori K."/>
            <person name="Takahashi-Fujii A."/>
            <person name="Hara H."/>
            <person name="Tanase T.-O."/>
            <person name="Nomura Y."/>
            <person name="Togiya S."/>
            <person name="Komai F."/>
            <person name="Hara R."/>
            <person name="Takeuchi K."/>
            <person name="Arita M."/>
            <person name="Imose N."/>
            <person name="Musashino K."/>
            <person name="Yuuki H."/>
            <person name="Oshima A."/>
            <person name="Sasaki N."/>
            <person name="Aotsuka S."/>
            <person name="Yoshikawa Y."/>
            <person name="Matsunawa H."/>
            <person name="Ichihara T."/>
            <person name="Shiohata N."/>
            <person name="Sano S."/>
            <person name="Moriya S."/>
            <person name="Momiyama H."/>
            <person name="Satoh N."/>
            <person name="Takami S."/>
            <person name="Terashima Y."/>
            <person name="Suzuki O."/>
            <person name="Nakagawa S."/>
            <person name="Senoh A."/>
            <person name="Mizoguchi H."/>
            <person name="Goto Y."/>
            <person name="Shimizu F."/>
            <person name="Wakebe H."/>
            <person name="Hishigaki H."/>
            <person name="Watanabe T."/>
            <person name="Sugiyama A."/>
            <person name="Takemoto M."/>
            <person name="Kawakami B."/>
            <person name="Yamazaki M."/>
            <person name="Watanabe K."/>
            <person name="Kumagai A."/>
            <person name="Itakura S."/>
            <person name="Fukuzumi Y."/>
            <person name="Fujimori Y."/>
            <person name="Komiyama M."/>
            <person name="Tashiro H."/>
            <person name="Tanigami A."/>
            <person name="Fujiwara T."/>
            <person name="Ono T."/>
            <person name="Yamada K."/>
            <person name="Fujii Y."/>
            <person name="Ozaki K."/>
            <person name="Hirao M."/>
            <person name="Ohmori Y."/>
            <person name="Kawabata A."/>
            <person name="Hikiji T."/>
            <person name="Kobatake N."/>
            <person name="Inagaki H."/>
            <person name="Ikema Y."/>
            <person name="Okamoto S."/>
            <person name="Okitani R."/>
            <person name="Kawakami T."/>
            <person name="Noguchi S."/>
            <person name="Itoh T."/>
            <person name="Shigeta K."/>
            <person name="Senba T."/>
            <person name="Matsumura K."/>
            <person name="Nakajima Y."/>
            <person name="Mizuno T."/>
            <person name="Morinaga M."/>
            <person name="Sasaki M."/>
            <person name="Togashi T."/>
            <person name="Oyama M."/>
            <person name="Hata H."/>
            <person name="Watanabe M."/>
            <person name="Komatsu T."/>
            <person name="Mizushima-Sugano J."/>
            <person name="Satoh T."/>
            <person name="Shirai Y."/>
            <person name="Takahashi Y."/>
            <person name="Nakagawa K."/>
            <person name="Okumura K."/>
            <person name="Nagase T."/>
            <person name="Nomura N."/>
            <person name="Kikuchi H."/>
            <person name="Masuho Y."/>
            <person name="Yamashita R."/>
            <person name="Nakai K."/>
            <person name="Yada T."/>
            <person name="Nakamura Y."/>
            <person name="Ohara O."/>
            <person name="Isogai T."/>
            <person name="Sugano S."/>
        </authorList>
    </citation>
    <scope>NUCLEOTIDE SEQUENCE [LARGE SCALE MRNA] OF 257-683 (ISOFORMS 1/2)</scope>
    <source>
        <tissue>Mammary gland</tissue>
    </source>
</reference>
<reference key="5">
    <citation type="journal article" date="2006" name="Nature">
        <title>Human chromosome 11 DNA sequence and analysis including novel gene identification.</title>
        <authorList>
            <person name="Taylor T.D."/>
            <person name="Noguchi H."/>
            <person name="Totoki Y."/>
            <person name="Toyoda A."/>
            <person name="Kuroki Y."/>
            <person name="Dewar K."/>
            <person name="Lloyd C."/>
            <person name="Itoh T."/>
            <person name="Takeda T."/>
            <person name="Kim D.-W."/>
            <person name="She X."/>
            <person name="Barlow K.F."/>
            <person name="Bloom T."/>
            <person name="Bruford E."/>
            <person name="Chang J.L."/>
            <person name="Cuomo C.A."/>
            <person name="Eichler E."/>
            <person name="FitzGerald M.G."/>
            <person name="Jaffe D.B."/>
            <person name="LaButti K."/>
            <person name="Nicol R."/>
            <person name="Park H.-S."/>
            <person name="Seaman C."/>
            <person name="Sougnez C."/>
            <person name="Yang X."/>
            <person name="Zimmer A.R."/>
            <person name="Zody M.C."/>
            <person name="Birren B.W."/>
            <person name="Nusbaum C."/>
            <person name="Fujiyama A."/>
            <person name="Hattori M."/>
            <person name="Rogers J."/>
            <person name="Lander E.S."/>
            <person name="Sakaki Y."/>
        </authorList>
    </citation>
    <scope>NUCLEOTIDE SEQUENCE [LARGE SCALE GENOMIC DNA]</scope>
</reference>
<reference key="6">
    <citation type="submission" date="2005-07" db="EMBL/GenBank/DDBJ databases">
        <authorList>
            <person name="Mural R.J."/>
            <person name="Istrail S."/>
            <person name="Sutton G."/>
            <person name="Florea L."/>
            <person name="Halpern A.L."/>
            <person name="Mobarry C.M."/>
            <person name="Lippert R."/>
            <person name="Walenz B."/>
            <person name="Shatkay H."/>
            <person name="Dew I."/>
            <person name="Miller J.R."/>
            <person name="Flanigan M.J."/>
            <person name="Edwards N.J."/>
            <person name="Bolanos R."/>
            <person name="Fasulo D."/>
            <person name="Halldorsson B.V."/>
            <person name="Hannenhalli S."/>
            <person name="Turner R."/>
            <person name="Yooseph S."/>
            <person name="Lu F."/>
            <person name="Nusskern D.R."/>
            <person name="Shue B.C."/>
            <person name="Zheng X.H."/>
            <person name="Zhong F."/>
            <person name="Delcher A.L."/>
            <person name="Huson D.H."/>
            <person name="Kravitz S.A."/>
            <person name="Mouchard L."/>
            <person name="Reinert K."/>
            <person name="Remington K.A."/>
            <person name="Clark A.G."/>
            <person name="Waterman M.S."/>
            <person name="Eichler E.E."/>
            <person name="Adams M.D."/>
            <person name="Hunkapiller M.W."/>
            <person name="Myers E.W."/>
            <person name="Venter J.C."/>
        </authorList>
    </citation>
    <scope>NUCLEOTIDE SEQUENCE [LARGE SCALE GENOMIC DNA]</scope>
</reference>
<reference key="7">
    <citation type="journal article" date="2004" name="J. Biol. Chem.">
        <title>The DIX domain protein coiled-coil-DIX1 inhibits c-Jun N-terminal kinase activation by Axin and dishevelled through distinct mechanisms.</title>
        <authorList>
            <person name="Wong C.K."/>
            <person name="Luo W."/>
            <person name="Deng Y."/>
            <person name="Zou H."/>
            <person name="Ye Z."/>
            <person name="Lin S.-C."/>
        </authorList>
    </citation>
    <scope>FUNCTION</scope>
    <scope>INTERACTION WITH AXIN1; DVL2; MAP3K4 AND RAC</scope>
</reference>
<reference key="8">
    <citation type="journal article" date="2008" name="Proc. Natl. Acad. Sci. U.S.A.">
        <title>A quantitative atlas of mitotic phosphorylation.</title>
        <authorList>
            <person name="Dephoure N."/>
            <person name="Zhou C."/>
            <person name="Villen J."/>
            <person name="Beausoleil S.A."/>
            <person name="Bakalarski C.E."/>
            <person name="Elledge S.J."/>
            <person name="Gygi S.P."/>
        </authorList>
    </citation>
    <scope>IDENTIFICATION BY MASS SPECTROMETRY [LARGE SCALE ANALYSIS]</scope>
    <source>
        <tissue>Cervix carcinoma</tissue>
    </source>
</reference>
<reference key="9">
    <citation type="journal article" date="2009" name="Cell Biol. Int.">
        <title>DIXDC1 co-localizes and interacts with gamma-tubulin in HEK293 cells.</title>
        <authorList>
            <person name="Wu Y."/>
            <person name="Jing X."/>
            <person name="Ma X."/>
            <person name="Wu Y."/>
            <person name="Ding X."/>
            <person name="Fan W."/>
            <person name="Fan M."/>
        </authorList>
    </citation>
    <scope>SUBCELLULAR LOCATION</scope>
    <scope>INTERACTION WITH GAMMA TUBULIN</scope>
</reference>
<reference key="10">
    <citation type="journal article" date="2010" name="Cancer Sci.">
        <title>Wnt signaling stabilizes the DIXDC1 protein through decreased ubiquitin-dependent degradation.</title>
        <authorList>
            <person name="Wang L."/>
            <person name="Li H."/>
            <person name="Chen Q."/>
            <person name="Zhu T."/>
            <person name="Zhu H."/>
            <person name="Zheng L."/>
        </authorList>
    </citation>
    <scope>PHOSPHORYLATION</scope>
    <scope>SUBCELLULAR LOCATION</scope>
    <scope>UBIQUITINATION</scope>
</reference>
<reference key="11">
    <citation type="journal article" date="2010" name="Proteomics">
        <title>Strategy for comprehensive identification of human N-myristoylated proteins using an insect cell-free protein synthesis system.</title>
        <authorList>
            <person name="Suzuki T."/>
            <person name="Moriya K."/>
            <person name="Nagatoshi K."/>
            <person name="Ota Y."/>
            <person name="Ezure T."/>
            <person name="Ando E."/>
            <person name="Tsunasawa S."/>
            <person name="Utsumi T."/>
        </authorList>
    </citation>
    <scope>MYRISTOYLATION AT GLY-2 (ISOFORM 2)</scope>
</reference>
<reference key="12">
    <citation type="journal article" date="2010" name="Sci. Signal.">
        <title>Quantitative phosphoproteomics reveals widespread full phosphorylation site occupancy during mitosis.</title>
        <authorList>
            <person name="Olsen J.V."/>
            <person name="Vermeulen M."/>
            <person name="Santamaria A."/>
            <person name="Kumar C."/>
            <person name="Miller M.L."/>
            <person name="Jensen L.J."/>
            <person name="Gnad F."/>
            <person name="Cox J."/>
            <person name="Jensen T.S."/>
            <person name="Nigg E.A."/>
            <person name="Brunak S."/>
            <person name="Mann M."/>
        </authorList>
    </citation>
    <scope>IDENTIFICATION BY MASS SPECTROMETRY [LARGE SCALE ANALYSIS]</scope>
    <source>
        <tissue>Cervix carcinoma</tissue>
    </source>
</reference>
<reference key="13">
    <citation type="journal article" date="2013" name="J. Proteome Res.">
        <title>Toward a comprehensive characterization of a human cancer cell phosphoproteome.</title>
        <authorList>
            <person name="Zhou H."/>
            <person name="Di Palma S."/>
            <person name="Preisinger C."/>
            <person name="Peng M."/>
            <person name="Polat A.N."/>
            <person name="Heck A.J."/>
            <person name="Mohammed S."/>
        </authorList>
    </citation>
    <scope>IDENTIFICATION BY MASS SPECTROMETRY [LARGE SCALE ANALYSIS]</scope>
    <source>
        <tissue>Cervix carcinoma</tissue>
        <tissue>Erythroleukemia</tissue>
    </source>
</reference>
<reference key="14">
    <citation type="journal article" date="2014" name="J. Proteomics">
        <title>An enzyme assisted RP-RPLC approach for in-depth analysis of human liver phosphoproteome.</title>
        <authorList>
            <person name="Bian Y."/>
            <person name="Song C."/>
            <person name="Cheng K."/>
            <person name="Dong M."/>
            <person name="Wang F."/>
            <person name="Huang J."/>
            <person name="Sun D."/>
            <person name="Wang L."/>
            <person name="Ye M."/>
            <person name="Zou H."/>
        </authorList>
    </citation>
    <scope>PHOSPHORYLATION [LARGE SCALE ANALYSIS] AT SER-590</scope>
    <scope>IDENTIFICATION BY MASS SPECTROMETRY [LARGE SCALE ANALYSIS]</scope>
    <source>
        <tissue>Liver</tissue>
    </source>
</reference>
<reference key="15">
    <citation type="journal article" date="2011" name="J. Biol. Chem.">
        <title>Molecular basis of Wnt activation via the DIX-domain protein Ccd1.</title>
        <authorList>
            <person name="Liu Y.T."/>
            <person name="Dan Q.J."/>
            <person name="Wang J."/>
            <person name="Feng Y."/>
            <person name="Chen L."/>
            <person name="Liang J."/>
            <person name="Li Q."/>
            <person name="Lin S.C."/>
            <person name="Wang Z.X."/>
            <person name="Wu J.W."/>
        </authorList>
    </citation>
    <scope>X-RAY CRYSTALLOGRAPHY (2.4 ANGSTROMS) OF 597-683</scope>
    <scope>FUNCTION</scope>
    <scope>MUTAGENESIS OF ASP-648; PHE-651 AND LYS-655</scope>
    <scope>DOMAIN</scope>
    <scope>INTERACTION WITH DVL2</scope>
</reference>
<evidence type="ECO:0000250" key="1">
    <source>
        <dbReference type="UniProtKB" id="Q80Y83"/>
    </source>
</evidence>
<evidence type="ECO:0000255" key="2"/>
<evidence type="ECO:0000255" key="3">
    <source>
        <dbReference type="PROSITE-ProRule" id="PRU00044"/>
    </source>
</evidence>
<evidence type="ECO:0000255" key="4">
    <source>
        <dbReference type="PROSITE-ProRule" id="PRU00069"/>
    </source>
</evidence>
<evidence type="ECO:0000256" key="5">
    <source>
        <dbReference type="SAM" id="MobiDB-lite"/>
    </source>
</evidence>
<evidence type="ECO:0000269" key="6">
    <source>
    </source>
</evidence>
<evidence type="ECO:0000269" key="7">
    <source>
    </source>
</evidence>
<evidence type="ECO:0000269" key="8">
    <source>
    </source>
</evidence>
<evidence type="ECO:0000269" key="9">
    <source>
    </source>
</evidence>
<evidence type="ECO:0000269" key="10">
    <source>
    </source>
</evidence>
<evidence type="ECO:0000269" key="11">
    <source>
    </source>
</evidence>
<evidence type="ECO:0000303" key="12">
    <source>
    </source>
</evidence>
<evidence type="ECO:0000303" key="13">
    <source>
    </source>
</evidence>
<evidence type="ECO:0000305" key="14"/>
<evidence type="ECO:0007744" key="15">
    <source>
    </source>
</evidence>
<evidence type="ECO:0007829" key="16">
    <source>
        <dbReference type="PDB" id="3PZ7"/>
    </source>
</evidence>
<proteinExistence type="evidence at protein level"/>
<dbReference type="EMBL" id="DQ642016">
    <property type="protein sequence ID" value="ABG25914.1"/>
    <property type="molecule type" value="mRNA"/>
</dbReference>
<dbReference type="EMBL" id="AB051522">
    <property type="protein sequence ID" value="BAB21826.1"/>
    <property type="status" value="ALT_INIT"/>
    <property type="molecule type" value="mRNA"/>
</dbReference>
<dbReference type="EMBL" id="AP000907">
    <property type="status" value="NOT_ANNOTATED_CDS"/>
    <property type="molecule type" value="Genomic_DNA"/>
</dbReference>
<dbReference type="EMBL" id="CH471065">
    <property type="protein sequence ID" value="EAW67171.1"/>
    <property type="molecule type" value="Genomic_DNA"/>
</dbReference>
<dbReference type="EMBL" id="BC033034">
    <property type="protein sequence ID" value="AAH33034.1"/>
    <property type="molecule type" value="mRNA"/>
</dbReference>
<dbReference type="EMBL" id="BC035509">
    <property type="protein sequence ID" value="AAH35509.1"/>
    <property type="status" value="ALT_SEQ"/>
    <property type="molecule type" value="mRNA"/>
</dbReference>
<dbReference type="EMBL" id="BC041626">
    <property type="protein sequence ID" value="AAH41626.2"/>
    <property type="molecule type" value="mRNA"/>
</dbReference>
<dbReference type="EMBL" id="BC048294">
    <property type="protein sequence ID" value="AAH48294.1"/>
    <property type="molecule type" value="mRNA"/>
</dbReference>
<dbReference type="EMBL" id="BC064479">
    <property type="protein sequence ID" value="AAH64479.1"/>
    <property type="status" value="ALT_SEQ"/>
    <property type="molecule type" value="mRNA"/>
</dbReference>
<dbReference type="EMBL" id="BC128600">
    <property type="protein sequence ID" value="AAI28601.1"/>
    <property type="molecule type" value="mRNA"/>
</dbReference>
<dbReference type="EMBL" id="AK055899">
    <property type="protein sequence ID" value="BAB71039.1"/>
    <property type="status" value="ALT_SEQ"/>
    <property type="molecule type" value="mRNA"/>
</dbReference>
<dbReference type="CCDS" id="CCDS60957.1">
    <molecule id="Q155Q3-5"/>
</dbReference>
<dbReference type="CCDS" id="CCDS73381.1">
    <molecule id="Q155Q3-1"/>
</dbReference>
<dbReference type="CCDS" id="CCDS73382.1">
    <molecule id="Q155Q3-2"/>
</dbReference>
<dbReference type="RefSeq" id="NP_001033043.1">
    <molecule id="Q155Q3-1"/>
    <property type="nucleotide sequence ID" value="NM_001037954.4"/>
</dbReference>
<dbReference type="RefSeq" id="NP_001265471.1">
    <molecule id="Q155Q3-5"/>
    <property type="nucleotide sequence ID" value="NM_001278542.2"/>
</dbReference>
<dbReference type="RefSeq" id="NP_219493.1">
    <molecule id="Q155Q3-2"/>
    <property type="nucleotide sequence ID" value="NM_033425.5"/>
</dbReference>
<dbReference type="PDB" id="3PZ7">
    <property type="method" value="X-ray"/>
    <property type="resolution" value="2.44 A"/>
    <property type="chains" value="A=597-683"/>
</dbReference>
<dbReference type="PDBsum" id="3PZ7"/>
<dbReference type="SMR" id="Q155Q3"/>
<dbReference type="BioGRID" id="124542">
    <property type="interactions" value="27"/>
</dbReference>
<dbReference type="CORUM" id="Q155Q3"/>
<dbReference type="FunCoup" id="Q155Q3">
    <property type="interactions" value="1119"/>
</dbReference>
<dbReference type="IntAct" id="Q155Q3">
    <property type="interactions" value="28"/>
</dbReference>
<dbReference type="MINT" id="Q155Q3"/>
<dbReference type="STRING" id="9606.ENSP00000394352"/>
<dbReference type="iPTMnet" id="Q155Q3"/>
<dbReference type="PhosphoSitePlus" id="Q155Q3"/>
<dbReference type="BioMuta" id="DIXDC1"/>
<dbReference type="DMDM" id="147641721"/>
<dbReference type="jPOST" id="Q155Q3"/>
<dbReference type="MassIVE" id="Q155Q3"/>
<dbReference type="PaxDb" id="9606-ENSP00000394352"/>
<dbReference type="PeptideAtlas" id="Q155Q3"/>
<dbReference type="ProteomicsDB" id="23427"/>
<dbReference type="ProteomicsDB" id="60652">
    <molecule id="Q155Q3-1"/>
</dbReference>
<dbReference type="ProteomicsDB" id="60653">
    <molecule id="Q155Q3-2"/>
</dbReference>
<dbReference type="ProteomicsDB" id="60654">
    <molecule id="Q155Q3-4"/>
</dbReference>
<dbReference type="Pumba" id="Q155Q3"/>
<dbReference type="Antibodypedia" id="32094">
    <property type="antibodies" value="212 antibodies from 30 providers"/>
</dbReference>
<dbReference type="DNASU" id="85458"/>
<dbReference type="Ensembl" id="ENST00000440460.7">
    <molecule id="Q155Q3-1"/>
    <property type="protein sequence ID" value="ENSP00000394352.3"/>
    <property type="gene ID" value="ENSG00000150764.14"/>
</dbReference>
<dbReference type="Ensembl" id="ENST00000529225.5">
    <molecule id="Q155Q3-5"/>
    <property type="protein sequence ID" value="ENSP00000434130.1"/>
    <property type="gene ID" value="ENSG00000150764.14"/>
</dbReference>
<dbReference type="Ensembl" id="ENST00000615255.1">
    <molecule id="Q155Q3-2"/>
    <property type="protein sequence ID" value="ENSP00000480808.1"/>
    <property type="gene ID" value="ENSG00000150764.14"/>
</dbReference>
<dbReference type="GeneID" id="85458"/>
<dbReference type="KEGG" id="hsa:85458"/>
<dbReference type="MANE-Select" id="ENST00000440460.7">
    <property type="protein sequence ID" value="ENSP00000394352.3"/>
    <property type="RefSeq nucleotide sequence ID" value="NM_001037954.4"/>
    <property type="RefSeq protein sequence ID" value="NP_001033043.1"/>
</dbReference>
<dbReference type="UCSC" id="uc001pmj.4">
    <molecule id="Q155Q3-1"/>
    <property type="organism name" value="human"/>
</dbReference>
<dbReference type="AGR" id="HGNC:23695"/>
<dbReference type="CTD" id="85458"/>
<dbReference type="DisGeNET" id="85458"/>
<dbReference type="GeneCards" id="DIXDC1"/>
<dbReference type="HGNC" id="HGNC:23695">
    <property type="gene designation" value="DIXDC1"/>
</dbReference>
<dbReference type="HPA" id="ENSG00000150764">
    <property type="expression patterns" value="Low tissue specificity"/>
</dbReference>
<dbReference type="MIM" id="610493">
    <property type="type" value="gene"/>
</dbReference>
<dbReference type="neXtProt" id="NX_Q155Q3"/>
<dbReference type="OpenTargets" id="ENSG00000150764"/>
<dbReference type="PharmGKB" id="PA134988674"/>
<dbReference type="VEuPathDB" id="HostDB:ENSG00000150764"/>
<dbReference type="eggNOG" id="ENOG502RD5G">
    <property type="taxonomic scope" value="Eukaryota"/>
</dbReference>
<dbReference type="GeneTree" id="ENSGT00950000182903"/>
<dbReference type="HOGENOM" id="CLU_111841_0_0_1"/>
<dbReference type="InParanoid" id="Q155Q3"/>
<dbReference type="OMA" id="ISWVNSQ"/>
<dbReference type="OrthoDB" id="30551at2759"/>
<dbReference type="PAN-GO" id="Q155Q3">
    <property type="GO annotations" value="2 GO annotations based on evolutionary models"/>
</dbReference>
<dbReference type="PhylomeDB" id="Q155Q3"/>
<dbReference type="PathwayCommons" id="Q155Q3"/>
<dbReference type="SignaLink" id="Q155Q3"/>
<dbReference type="BioGRID-ORCS" id="85458">
    <property type="hits" value="13 hits in 1093 CRISPR screens"/>
</dbReference>
<dbReference type="CD-CODE" id="8C2F96ED">
    <property type="entry name" value="Centrosome"/>
</dbReference>
<dbReference type="ChiTaRS" id="DIXDC1">
    <property type="organism name" value="human"/>
</dbReference>
<dbReference type="EvolutionaryTrace" id="Q155Q3"/>
<dbReference type="GeneWiki" id="DIXDC1"/>
<dbReference type="GenomeRNAi" id="85458"/>
<dbReference type="Pharos" id="Q155Q3">
    <property type="development level" value="Tbio"/>
</dbReference>
<dbReference type="PRO" id="PR:Q155Q3"/>
<dbReference type="Proteomes" id="UP000005640">
    <property type="component" value="Chromosome 11"/>
</dbReference>
<dbReference type="RNAct" id="Q155Q3">
    <property type="molecule type" value="protein"/>
</dbReference>
<dbReference type="Bgee" id="ENSG00000150764">
    <property type="expression patterns" value="Expressed in calcaneal tendon and 208 other cell types or tissues"/>
</dbReference>
<dbReference type="ExpressionAtlas" id="Q155Q3">
    <property type="expression patterns" value="baseline and differential"/>
</dbReference>
<dbReference type="GO" id="GO:0005829">
    <property type="term" value="C:cytosol"/>
    <property type="evidence" value="ECO:0000314"/>
    <property type="project" value="HPA"/>
</dbReference>
<dbReference type="GO" id="GO:0005925">
    <property type="term" value="C:focal adhesion"/>
    <property type="evidence" value="ECO:0007669"/>
    <property type="project" value="UniProtKB-SubCell"/>
</dbReference>
<dbReference type="GO" id="GO:0098978">
    <property type="term" value="C:glutamatergic synapse"/>
    <property type="evidence" value="ECO:0007669"/>
    <property type="project" value="Ensembl"/>
</dbReference>
<dbReference type="GO" id="GO:0098794">
    <property type="term" value="C:postsynapse"/>
    <property type="evidence" value="ECO:0007669"/>
    <property type="project" value="Ensembl"/>
</dbReference>
<dbReference type="GO" id="GO:0001725">
    <property type="term" value="C:stress fiber"/>
    <property type="evidence" value="ECO:0007669"/>
    <property type="project" value="UniProtKB-SubCell"/>
</dbReference>
<dbReference type="GO" id="GO:0003779">
    <property type="term" value="F:actin binding"/>
    <property type="evidence" value="ECO:0007669"/>
    <property type="project" value="UniProtKB-KW"/>
</dbReference>
<dbReference type="GO" id="GO:0043015">
    <property type="term" value="F:gamma-tubulin binding"/>
    <property type="evidence" value="ECO:0000314"/>
    <property type="project" value="UniProtKB"/>
</dbReference>
<dbReference type="GO" id="GO:0019904">
    <property type="term" value="F:protein domain specific binding"/>
    <property type="evidence" value="ECO:0007669"/>
    <property type="project" value="Ensembl"/>
</dbReference>
<dbReference type="GO" id="GO:0060070">
    <property type="term" value="P:canonical Wnt signaling pathway"/>
    <property type="evidence" value="ECO:0000314"/>
    <property type="project" value="UniProtKB"/>
</dbReference>
<dbReference type="GO" id="GO:0021799">
    <property type="term" value="P:cerebral cortex radially oriented cell migration"/>
    <property type="evidence" value="ECO:0007669"/>
    <property type="project" value="Ensembl"/>
</dbReference>
<dbReference type="GO" id="GO:0021869">
    <property type="term" value="P:forebrain ventricular zone progenitor cell division"/>
    <property type="evidence" value="ECO:0007669"/>
    <property type="project" value="Ensembl"/>
</dbReference>
<dbReference type="GO" id="GO:0098885">
    <property type="term" value="P:modification of postsynaptic actin cytoskeleton"/>
    <property type="evidence" value="ECO:0007669"/>
    <property type="project" value="Ensembl"/>
</dbReference>
<dbReference type="GO" id="GO:0045665">
    <property type="term" value="P:negative regulation of neuron differentiation"/>
    <property type="evidence" value="ECO:0007669"/>
    <property type="project" value="Ensembl"/>
</dbReference>
<dbReference type="GO" id="GO:0030177">
    <property type="term" value="P:positive regulation of Wnt signaling pathway"/>
    <property type="evidence" value="ECO:0007669"/>
    <property type="project" value="Ensembl"/>
</dbReference>
<dbReference type="GO" id="GO:0032956">
    <property type="term" value="P:regulation of actin cytoskeleton organization"/>
    <property type="evidence" value="ECO:0007669"/>
    <property type="project" value="Ensembl"/>
</dbReference>
<dbReference type="GO" id="GO:0070507">
    <property type="term" value="P:regulation of microtubule cytoskeleton organization"/>
    <property type="evidence" value="ECO:0007669"/>
    <property type="project" value="Ensembl"/>
</dbReference>
<dbReference type="CDD" id="cd21213">
    <property type="entry name" value="CH_DIXDC1"/>
    <property type="match status" value="1"/>
</dbReference>
<dbReference type="FunFam" id="1.10.418.10:FF:000054">
    <property type="entry name" value="Dixin isoform 1"/>
    <property type="match status" value="1"/>
</dbReference>
<dbReference type="FunFam" id="2.40.240.130:FF:000003">
    <property type="entry name" value="Dixin isoform 1"/>
    <property type="match status" value="1"/>
</dbReference>
<dbReference type="Gene3D" id="2.40.240.130">
    <property type="match status" value="1"/>
</dbReference>
<dbReference type="Gene3D" id="1.10.418.10">
    <property type="entry name" value="Calponin-like domain"/>
    <property type="match status" value="1"/>
</dbReference>
<dbReference type="InterPro" id="IPR001715">
    <property type="entry name" value="CH_dom"/>
</dbReference>
<dbReference type="InterPro" id="IPR036872">
    <property type="entry name" value="CH_dom_sf"/>
</dbReference>
<dbReference type="InterPro" id="IPR001158">
    <property type="entry name" value="DIX"/>
</dbReference>
<dbReference type="InterPro" id="IPR038207">
    <property type="entry name" value="DIX_dom_sf"/>
</dbReference>
<dbReference type="InterPro" id="IPR015506">
    <property type="entry name" value="Dsh/Dvl-rel"/>
</dbReference>
<dbReference type="InterPro" id="IPR029071">
    <property type="entry name" value="Ubiquitin-like_domsf"/>
</dbReference>
<dbReference type="PANTHER" id="PTHR10878:SF22">
    <property type="entry name" value="DIXIN"/>
    <property type="match status" value="1"/>
</dbReference>
<dbReference type="PANTHER" id="PTHR10878">
    <property type="entry name" value="SEGMENT POLARITY PROTEIN DISHEVELLED"/>
    <property type="match status" value="1"/>
</dbReference>
<dbReference type="Pfam" id="PF00307">
    <property type="entry name" value="CH"/>
    <property type="match status" value="1"/>
</dbReference>
<dbReference type="Pfam" id="PF00778">
    <property type="entry name" value="DIX"/>
    <property type="match status" value="1"/>
</dbReference>
<dbReference type="SMART" id="SM00033">
    <property type="entry name" value="CH"/>
    <property type="match status" value="1"/>
</dbReference>
<dbReference type="SMART" id="SM00021">
    <property type="entry name" value="DAX"/>
    <property type="match status" value="1"/>
</dbReference>
<dbReference type="SUPFAM" id="SSF47576">
    <property type="entry name" value="Calponin-homology domain, CH-domain"/>
    <property type="match status" value="1"/>
</dbReference>
<dbReference type="SUPFAM" id="SSF54236">
    <property type="entry name" value="Ubiquitin-like"/>
    <property type="match status" value="1"/>
</dbReference>
<dbReference type="PROSITE" id="PS50021">
    <property type="entry name" value="CH"/>
    <property type="match status" value="1"/>
</dbReference>
<dbReference type="PROSITE" id="PS50841">
    <property type="entry name" value="DIX"/>
    <property type="match status" value="1"/>
</dbReference>
<organism>
    <name type="scientific">Homo sapiens</name>
    <name type="common">Human</name>
    <dbReference type="NCBI Taxonomy" id="9606"/>
    <lineage>
        <taxon>Eukaryota</taxon>
        <taxon>Metazoa</taxon>
        <taxon>Chordata</taxon>
        <taxon>Craniata</taxon>
        <taxon>Vertebrata</taxon>
        <taxon>Euteleostomi</taxon>
        <taxon>Mammalia</taxon>
        <taxon>Eutheria</taxon>
        <taxon>Euarchontoglires</taxon>
        <taxon>Primates</taxon>
        <taxon>Haplorrhini</taxon>
        <taxon>Catarrhini</taxon>
        <taxon>Hominidae</taxon>
        <taxon>Homo</taxon>
    </lineage>
</organism>
<keyword id="KW-0002">3D-structure</keyword>
<keyword id="KW-0009">Actin-binding</keyword>
<keyword id="KW-0025">Alternative splicing</keyword>
<keyword id="KW-0965">Cell junction</keyword>
<keyword id="KW-0175">Coiled coil</keyword>
<keyword id="KW-0963">Cytoplasm</keyword>
<keyword id="KW-0206">Cytoskeleton</keyword>
<keyword id="KW-0217">Developmental protein</keyword>
<keyword id="KW-0449">Lipoprotein</keyword>
<keyword id="KW-0519">Myristate</keyword>
<keyword id="KW-0597">Phosphoprotein</keyword>
<keyword id="KW-1267">Proteomics identification</keyword>
<keyword id="KW-1185">Reference proteome</keyword>
<keyword id="KW-0832">Ubl conjugation</keyword>
<keyword id="KW-0879">Wnt signaling pathway</keyword>